<keyword id="KW-0066">ATP synthesis</keyword>
<keyword id="KW-0067">ATP-binding</keyword>
<keyword id="KW-0139">CF(1)</keyword>
<keyword id="KW-0150">Chloroplast</keyword>
<keyword id="KW-0375">Hydrogen ion transport</keyword>
<keyword id="KW-0406">Ion transport</keyword>
<keyword id="KW-0472">Membrane</keyword>
<keyword id="KW-0547">Nucleotide-binding</keyword>
<keyword id="KW-0934">Plastid</keyword>
<keyword id="KW-0793">Thylakoid</keyword>
<keyword id="KW-1278">Translocase</keyword>
<keyword id="KW-0813">Transport</keyword>
<proteinExistence type="inferred from homology"/>
<geneLocation type="chloroplast"/>
<sequence length="475" mass="51338">MTNTATNIGYITQIIGPVVDVEFTTGKLPQIYNAIIIGSGENAVTCEVQQLLGNNKVRAVSMTSTDGLKRGMEVTDTQAPISVPVGKATLGRIFNVLGQPVDNMGDVALDQTLPIHRGSPAFTQLETKPSIFETGIKVVDLLAPYRRGGKIGLFGGAGVGKTVLIMELINNIAKAHGGVSVFGGVGERTREGNDLYMEMKESKVINESNLGESKVALVYGQMNEPPGARMRVGLTALTMAEYFRDVNKQDVLLFIDNIFRFVQAGSEVSALLGRMPSAVGYQPTLATEMGSLQERITSTTEGSITSIQAVYVPADDLTDPAPATTFSHLDATTVLSRNLAAKGIYPAVDPLDSTSTMLQINIVGQEHYSCAQNVKETLQRYKELQDIIAILGLDELSEEDRQIVARARKIERFLSQPFFVAEVFTGSPGKYVSLADTMKGFNMILNGELDELPEQSFYLVGNIDEAIEKAKSLKG</sequence>
<name>ATPB_GUITH</name>
<feature type="chain" id="PRO_0000144515" description="ATP synthase subunit beta, chloroplastic">
    <location>
        <begin position="1"/>
        <end position="475"/>
    </location>
</feature>
<feature type="binding site" evidence="1">
    <location>
        <begin position="155"/>
        <end position="162"/>
    </location>
    <ligand>
        <name>ATP</name>
        <dbReference type="ChEBI" id="CHEBI:30616"/>
    </ligand>
</feature>
<reference key="1">
    <citation type="journal article" date="1994" name="J. Phycol.">
        <title>Structural, transcriptional and phylogenetic analyses of the atpB gene cluster from the plastid of Cryptomonas F (Cryptophyceae).</title>
        <authorList>
            <person name="Douglas S.E."/>
            <person name="Murphy C.A."/>
        </authorList>
    </citation>
    <scope>NUCLEOTIDE SEQUENCE [GENOMIC DNA]</scope>
</reference>
<reference key="2">
    <citation type="journal article" date="1999" name="J. Mol. Evol.">
        <title>The plastid genome of the cryptophyte alga, Guillardia theta: complete sequence and conserved synteny groups confirm its common ancestry with red algae.</title>
        <authorList>
            <person name="Douglas S.E."/>
            <person name="Penny S.L."/>
        </authorList>
    </citation>
    <scope>NUCLEOTIDE SEQUENCE [LARGE SCALE GENOMIC DNA]</scope>
</reference>
<organism>
    <name type="scientific">Guillardia theta</name>
    <name type="common">Cryptophyte</name>
    <name type="synonym">Cryptomonas phi</name>
    <dbReference type="NCBI Taxonomy" id="55529"/>
    <lineage>
        <taxon>Eukaryota</taxon>
        <taxon>Cryptophyceae</taxon>
        <taxon>Pyrenomonadales</taxon>
        <taxon>Geminigeraceae</taxon>
        <taxon>Guillardia</taxon>
    </lineage>
</organism>
<protein>
    <recommendedName>
        <fullName evidence="1">ATP synthase subunit beta, chloroplastic</fullName>
        <ecNumber evidence="1">7.1.2.2</ecNumber>
    </recommendedName>
    <alternativeName>
        <fullName evidence="1">ATP synthase F1 sector subunit beta</fullName>
    </alternativeName>
    <alternativeName>
        <fullName evidence="1">F-ATPase subunit beta</fullName>
    </alternativeName>
</protein>
<gene>
    <name evidence="1" type="primary">atpB</name>
</gene>
<comment type="function">
    <text evidence="1">Produces ATP from ADP in the presence of a proton gradient across the membrane. The catalytic sites are hosted primarily by the beta subunits.</text>
</comment>
<comment type="catalytic activity">
    <reaction evidence="1">
        <text>ATP + H2O + 4 H(+)(in) = ADP + phosphate + 5 H(+)(out)</text>
        <dbReference type="Rhea" id="RHEA:57720"/>
        <dbReference type="ChEBI" id="CHEBI:15377"/>
        <dbReference type="ChEBI" id="CHEBI:15378"/>
        <dbReference type="ChEBI" id="CHEBI:30616"/>
        <dbReference type="ChEBI" id="CHEBI:43474"/>
        <dbReference type="ChEBI" id="CHEBI:456216"/>
        <dbReference type="EC" id="7.1.2.2"/>
    </reaction>
</comment>
<comment type="subunit">
    <text evidence="1">F-type ATPases have 2 components, CF(1) - the catalytic core - and CF(0) - the membrane proton channel. CF(1) has five subunits: alpha(3), beta(3), gamma(1), delta(1), epsilon(1). CF(0) has four main subunits: a(1), b(1), b'(1) and c(9-12).</text>
</comment>
<comment type="subcellular location">
    <subcellularLocation>
        <location evidence="1">Plastid</location>
        <location evidence="1">Chloroplast thylakoid membrane</location>
        <topology evidence="1">Peripheral membrane protein</topology>
    </subcellularLocation>
</comment>
<comment type="similarity">
    <text evidence="1">Belongs to the ATPase alpha/beta chains family.</text>
</comment>
<evidence type="ECO:0000255" key="1">
    <source>
        <dbReference type="HAMAP-Rule" id="MF_01347"/>
    </source>
</evidence>
<accession>O78491</accession>
<dbReference type="EC" id="7.1.2.2" evidence="1"/>
<dbReference type="EMBL" id="AF041468">
    <property type="protein sequence ID" value="AAC35682.1"/>
    <property type="molecule type" value="Genomic_DNA"/>
</dbReference>
<dbReference type="RefSeq" id="NP_050748.1">
    <property type="nucleotide sequence ID" value="NC_000926.1"/>
</dbReference>
<dbReference type="SMR" id="O78491"/>
<dbReference type="GeneID" id="857053"/>
<dbReference type="HOGENOM" id="CLU_022398_0_2_1"/>
<dbReference type="OMA" id="IDVYFPE"/>
<dbReference type="GO" id="GO:0009535">
    <property type="term" value="C:chloroplast thylakoid membrane"/>
    <property type="evidence" value="ECO:0007669"/>
    <property type="project" value="UniProtKB-SubCell"/>
</dbReference>
<dbReference type="GO" id="GO:0005739">
    <property type="term" value="C:mitochondrion"/>
    <property type="evidence" value="ECO:0007669"/>
    <property type="project" value="GOC"/>
</dbReference>
<dbReference type="GO" id="GO:0045259">
    <property type="term" value="C:proton-transporting ATP synthase complex"/>
    <property type="evidence" value="ECO:0007669"/>
    <property type="project" value="UniProtKB-KW"/>
</dbReference>
<dbReference type="GO" id="GO:0005524">
    <property type="term" value="F:ATP binding"/>
    <property type="evidence" value="ECO:0007669"/>
    <property type="project" value="UniProtKB-UniRule"/>
</dbReference>
<dbReference type="GO" id="GO:0016887">
    <property type="term" value="F:ATP hydrolysis activity"/>
    <property type="evidence" value="ECO:0007669"/>
    <property type="project" value="InterPro"/>
</dbReference>
<dbReference type="GO" id="GO:0046933">
    <property type="term" value="F:proton-transporting ATP synthase activity, rotational mechanism"/>
    <property type="evidence" value="ECO:0007669"/>
    <property type="project" value="UniProtKB-UniRule"/>
</dbReference>
<dbReference type="GO" id="GO:0042776">
    <property type="term" value="P:proton motive force-driven mitochondrial ATP synthesis"/>
    <property type="evidence" value="ECO:0007669"/>
    <property type="project" value="TreeGrafter"/>
</dbReference>
<dbReference type="CDD" id="cd18110">
    <property type="entry name" value="ATP-synt_F1_beta_C"/>
    <property type="match status" value="1"/>
</dbReference>
<dbReference type="CDD" id="cd18115">
    <property type="entry name" value="ATP-synt_F1_beta_N"/>
    <property type="match status" value="1"/>
</dbReference>
<dbReference type="CDD" id="cd01133">
    <property type="entry name" value="F1-ATPase_beta_CD"/>
    <property type="match status" value="1"/>
</dbReference>
<dbReference type="FunFam" id="1.10.1140.10:FF:000001">
    <property type="entry name" value="ATP synthase subunit beta"/>
    <property type="match status" value="1"/>
</dbReference>
<dbReference type="FunFam" id="3.40.50.12240:FF:000006">
    <property type="entry name" value="ATP synthase subunit beta"/>
    <property type="match status" value="1"/>
</dbReference>
<dbReference type="FunFam" id="3.40.50.300:FF:000004">
    <property type="entry name" value="ATP synthase subunit beta"/>
    <property type="match status" value="1"/>
</dbReference>
<dbReference type="Gene3D" id="2.40.10.170">
    <property type="match status" value="1"/>
</dbReference>
<dbReference type="Gene3D" id="1.10.1140.10">
    <property type="entry name" value="Bovine Mitochondrial F1-atpase, Atp Synthase Beta Chain, Chain D, domain 3"/>
    <property type="match status" value="1"/>
</dbReference>
<dbReference type="Gene3D" id="3.40.50.300">
    <property type="entry name" value="P-loop containing nucleotide triphosphate hydrolases"/>
    <property type="match status" value="1"/>
</dbReference>
<dbReference type="HAMAP" id="MF_01347">
    <property type="entry name" value="ATP_synth_beta_bact"/>
    <property type="match status" value="1"/>
</dbReference>
<dbReference type="InterPro" id="IPR003593">
    <property type="entry name" value="AAA+_ATPase"/>
</dbReference>
<dbReference type="InterPro" id="IPR055190">
    <property type="entry name" value="ATP-synt_VA_C"/>
</dbReference>
<dbReference type="InterPro" id="IPR005722">
    <property type="entry name" value="ATP_synth_F1_bsu"/>
</dbReference>
<dbReference type="InterPro" id="IPR020003">
    <property type="entry name" value="ATPase_a/bsu_AS"/>
</dbReference>
<dbReference type="InterPro" id="IPR050053">
    <property type="entry name" value="ATPase_alpha/beta_chains"/>
</dbReference>
<dbReference type="InterPro" id="IPR004100">
    <property type="entry name" value="ATPase_F1/V1/A1_a/bsu_N"/>
</dbReference>
<dbReference type="InterPro" id="IPR036121">
    <property type="entry name" value="ATPase_F1/V1/A1_a/bsu_N_sf"/>
</dbReference>
<dbReference type="InterPro" id="IPR000194">
    <property type="entry name" value="ATPase_F1/V1/A1_a/bsu_nucl-bd"/>
</dbReference>
<dbReference type="InterPro" id="IPR024034">
    <property type="entry name" value="ATPase_F1/V1_b/a_C"/>
</dbReference>
<dbReference type="InterPro" id="IPR027417">
    <property type="entry name" value="P-loop_NTPase"/>
</dbReference>
<dbReference type="NCBIfam" id="TIGR01039">
    <property type="entry name" value="atpD"/>
    <property type="match status" value="1"/>
</dbReference>
<dbReference type="PANTHER" id="PTHR15184">
    <property type="entry name" value="ATP SYNTHASE"/>
    <property type="match status" value="1"/>
</dbReference>
<dbReference type="PANTHER" id="PTHR15184:SF71">
    <property type="entry name" value="ATP SYNTHASE SUBUNIT BETA, MITOCHONDRIAL"/>
    <property type="match status" value="1"/>
</dbReference>
<dbReference type="Pfam" id="PF00006">
    <property type="entry name" value="ATP-synt_ab"/>
    <property type="match status" value="1"/>
</dbReference>
<dbReference type="Pfam" id="PF02874">
    <property type="entry name" value="ATP-synt_ab_N"/>
    <property type="match status" value="1"/>
</dbReference>
<dbReference type="Pfam" id="PF22919">
    <property type="entry name" value="ATP-synt_VA_C"/>
    <property type="match status" value="1"/>
</dbReference>
<dbReference type="SMART" id="SM00382">
    <property type="entry name" value="AAA"/>
    <property type="match status" value="1"/>
</dbReference>
<dbReference type="SUPFAM" id="SSF47917">
    <property type="entry name" value="C-terminal domain of alpha and beta subunits of F1 ATP synthase"/>
    <property type="match status" value="1"/>
</dbReference>
<dbReference type="SUPFAM" id="SSF50615">
    <property type="entry name" value="N-terminal domain of alpha and beta subunits of F1 ATP synthase"/>
    <property type="match status" value="1"/>
</dbReference>
<dbReference type="SUPFAM" id="SSF52540">
    <property type="entry name" value="P-loop containing nucleoside triphosphate hydrolases"/>
    <property type="match status" value="1"/>
</dbReference>
<dbReference type="PROSITE" id="PS00152">
    <property type="entry name" value="ATPASE_ALPHA_BETA"/>
    <property type="match status" value="1"/>
</dbReference>